<reference key="1">
    <citation type="submission" date="2007-03" db="EMBL/GenBank/DDBJ databases">
        <title>Complete sequence of chromosome 1 of Burkholderia vietnamiensis G4.</title>
        <authorList>
            <consortium name="US DOE Joint Genome Institute"/>
            <person name="Copeland A."/>
            <person name="Lucas S."/>
            <person name="Lapidus A."/>
            <person name="Barry K."/>
            <person name="Detter J.C."/>
            <person name="Glavina del Rio T."/>
            <person name="Hammon N."/>
            <person name="Israni S."/>
            <person name="Dalin E."/>
            <person name="Tice H."/>
            <person name="Pitluck S."/>
            <person name="Chain P."/>
            <person name="Malfatti S."/>
            <person name="Shin M."/>
            <person name="Vergez L."/>
            <person name="Schmutz J."/>
            <person name="Larimer F."/>
            <person name="Land M."/>
            <person name="Hauser L."/>
            <person name="Kyrpides N."/>
            <person name="Tiedje J."/>
            <person name="Richardson P."/>
        </authorList>
    </citation>
    <scope>NUCLEOTIDE SEQUENCE [LARGE SCALE GENOMIC DNA]</scope>
    <source>
        <strain>G4 / LMG 22486</strain>
    </source>
</reference>
<gene>
    <name evidence="1" type="primary">argH</name>
    <name type="ordered locus">Bcep1808_2513</name>
</gene>
<dbReference type="EC" id="4.3.2.1" evidence="1"/>
<dbReference type="EMBL" id="CP000614">
    <property type="protein sequence ID" value="ABO55511.1"/>
    <property type="molecule type" value="Genomic_DNA"/>
</dbReference>
<dbReference type="SMR" id="A4JGV8"/>
<dbReference type="KEGG" id="bvi:Bcep1808_2513"/>
<dbReference type="eggNOG" id="COG0165">
    <property type="taxonomic scope" value="Bacteria"/>
</dbReference>
<dbReference type="HOGENOM" id="CLU_027272_2_3_4"/>
<dbReference type="UniPathway" id="UPA00068">
    <property type="reaction ID" value="UER00114"/>
</dbReference>
<dbReference type="Proteomes" id="UP000002287">
    <property type="component" value="Chromosome 1"/>
</dbReference>
<dbReference type="GO" id="GO:0005829">
    <property type="term" value="C:cytosol"/>
    <property type="evidence" value="ECO:0007669"/>
    <property type="project" value="TreeGrafter"/>
</dbReference>
<dbReference type="GO" id="GO:0004056">
    <property type="term" value="F:argininosuccinate lyase activity"/>
    <property type="evidence" value="ECO:0007669"/>
    <property type="project" value="UniProtKB-UniRule"/>
</dbReference>
<dbReference type="GO" id="GO:0042450">
    <property type="term" value="P:arginine biosynthetic process via ornithine"/>
    <property type="evidence" value="ECO:0007669"/>
    <property type="project" value="InterPro"/>
</dbReference>
<dbReference type="GO" id="GO:0006526">
    <property type="term" value="P:L-arginine biosynthetic process"/>
    <property type="evidence" value="ECO:0007669"/>
    <property type="project" value="UniProtKB-UniRule"/>
</dbReference>
<dbReference type="CDD" id="cd01359">
    <property type="entry name" value="Argininosuccinate_lyase"/>
    <property type="match status" value="1"/>
</dbReference>
<dbReference type="FunFam" id="1.10.275.10:FF:000002">
    <property type="entry name" value="Argininosuccinate lyase"/>
    <property type="match status" value="1"/>
</dbReference>
<dbReference type="FunFam" id="1.10.40.30:FF:000001">
    <property type="entry name" value="Argininosuccinate lyase"/>
    <property type="match status" value="1"/>
</dbReference>
<dbReference type="FunFam" id="1.20.200.10:FF:000015">
    <property type="entry name" value="argininosuccinate lyase isoform X2"/>
    <property type="match status" value="1"/>
</dbReference>
<dbReference type="Gene3D" id="1.10.40.30">
    <property type="entry name" value="Fumarase/aspartase (C-terminal domain)"/>
    <property type="match status" value="1"/>
</dbReference>
<dbReference type="Gene3D" id="1.20.200.10">
    <property type="entry name" value="Fumarase/aspartase (Central domain)"/>
    <property type="match status" value="1"/>
</dbReference>
<dbReference type="Gene3D" id="1.10.275.10">
    <property type="entry name" value="Fumarase/aspartase (N-terminal domain)"/>
    <property type="match status" value="1"/>
</dbReference>
<dbReference type="HAMAP" id="MF_00006">
    <property type="entry name" value="Arg_succ_lyase"/>
    <property type="match status" value="1"/>
</dbReference>
<dbReference type="InterPro" id="IPR029419">
    <property type="entry name" value="Arg_succ_lyase_C"/>
</dbReference>
<dbReference type="InterPro" id="IPR009049">
    <property type="entry name" value="Argininosuccinate_lyase"/>
</dbReference>
<dbReference type="InterPro" id="IPR024083">
    <property type="entry name" value="Fumarase/histidase_N"/>
</dbReference>
<dbReference type="InterPro" id="IPR020557">
    <property type="entry name" value="Fumarate_lyase_CS"/>
</dbReference>
<dbReference type="InterPro" id="IPR000362">
    <property type="entry name" value="Fumarate_lyase_fam"/>
</dbReference>
<dbReference type="InterPro" id="IPR022761">
    <property type="entry name" value="Fumarate_lyase_N"/>
</dbReference>
<dbReference type="InterPro" id="IPR008948">
    <property type="entry name" value="L-Aspartase-like"/>
</dbReference>
<dbReference type="NCBIfam" id="TIGR00838">
    <property type="entry name" value="argH"/>
    <property type="match status" value="1"/>
</dbReference>
<dbReference type="PANTHER" id="PTHR43814">
    <property type="entry name" value="ARGININOSUCCINATE LYASE"/>
    <property type="match status" value="1"/>
</dbReference>
<dbReference type="PANTHER" id="PTHR43814:SF1">
    <property type="entry name" value="ARGININOSUCCINATE LYASE"/>
    <property type="match status" value="1"/>
</dbReference>
<dbReference type="Pfam" id="PF14698">
    <property type="entry name" value="ASL_C2"/>
    <property type="match status" value="1"/>
</dbReference>
<dbReference type="Pfam" id="PF00206">
    <property type="entry name" value="Lyase_1"/>
    <property type="match status" value="1"/>
</dbReference>
<dbReference type="PRINTS" id="PR00145">
    <property type="entry name" value="ARGSUCLYASE"/>
</dbReference>
<dbReference type="PRINTS" id="PR00149">
    <property type="entry name" value="FUMRATELYASE"/>
</dbReference>
<dbReference type="SUPFAM" id="SSF48557">
    <property type="entry name" value="L-aspartase-like"/>
    <property type="match status" value="1"/>
</dbReference>
<dbReference type="PROSITE" id="PS00163">
    <property type="entry name" value="FUMARATE_LYASES"/>
    <property type="match status" value="1"/>
</dbReference>
<organism>
    <name type="scientific">Burkholderia vietnamiensis (strain G4 / LMG 22486)</name>
    <name type="common">Burkholderia cepacia (strain R1808)</name>
    <dbReference type="NCBI Taxonomy" id="269482"/>
    <lineage>
        <taxon>Bacteria</taxon>
        <taxon>Pseudomonadati</taxon>
        <taxon>Pseudomonadota</taxon>
        <taxon>Betaproteobacteria</taxon>
        <taxon>Burkholderiales</taxon>
        <taxon>Burkholderiaceae</taxon>
        <taxon>Burkholderia</taxon>
        <taxon>Burkholderia cepacia complex</taxon>
    </lineage>
</organism>
<comment type="catalytic activity">
    <reaction evidence="1">
        <text>2-(N(omega)-L-arginino)succinate = fumarate + L-arginine</text>
        <dbReference type="Rhea" id="RHEA:24020"/>
        <dbReference type="ChEBI" id="CHEBI:29806"/>
        <dbReference type="ChEBI" id="CHEBI:32682"/>
        <dbReference type="ChEBI" id="CHEBI:57472"/>
        <dbReference type="EC" id="4.3.2.1"/>
    </reaction>
</comment>
<comment type="pathway">
    <text evidence="1">Amino-acid biosynthesis; L-arginine biosynthesis; L-arginine from L-ornithine and carbamoyl phosphate: step 3/3.</text>
</comment>
<comment type="subcellular location">
    <subcellularLocation>
        <location evidence="1">Cytoplasm</location>
    </subcellularLocation>
</comment>
<comment type="similarity">
    <text evidence="1">Belongs to the lyase 1 family. Argininosuccinate lyase subfamily.</text>
</comment>
<accession>A4JGV8</accession>
<protein>
    <recommendedName>
        <fullName evidence="1">Argininosuccinate lyase</fullName>
        <shortName evidence="1">ASAL</shortName>
        <ecNumber evidence="1">4.3.2.1</ecNumber>
    </recommendedName>
    <alternativeName>
        <fullName evidence="1">Arginosuccinase</fullName>
    </alternativeName>
</protein>
<sequence length="469" mass="51338">MTSQLHKKGEAWSARFSEPMSELVKRYTSSVFFDKRLALVDIAGSLAHASMLAAQKIISADDLAAIERGMAQIKGEIERGEFEWQLDLEDVHLNIEARLTALIGDAGKRLHTGRSRNDQVATDIRLWLRGEIDRIGGLLNDLRGALLDLAEQNADTIMPGFTHLQVAQPVTFGHHLLAYVEMFTRDAQRMRDCRTRVNRLPLGAAALAGTSYPIDRHAVAKTLGFDGICANSLDAVSDRDFAIEFTAASALVMTHVSRFSEELVLWMSPRVGFIDIADRFCTGSSIMPQKKNPDVPELARGKTGRVNGHLMALLTLMKGQPLAYNKDNQEDKEPLFDTVDTVADTLRIFAEMVAGITVKPDAMRAAALQGFSTATDLADYLVKRGLPFRDAHEAVAHAVRICDDRGIDLADLTLDEMKQELPNVAHLIGDDVFGYLTLEGSVASRNHPGGTAPDQVRAAIKAARAALGE</sequence>
<keyword id="KW-0028">Amino-acid biosynthesis</keyword>
<keyword id="KW-0055">Arginine biosynthesis</keyword>
<keyword id="KW-0963">Cytoplasm</keyword>
<keyword id="KW-0456">Lyase</keyword>
<evidence type="ECO:0000255" key="1">
    <source>
        <dbReference type="HAMAP-Rule" id="MF_00006"/>
    </source>
</evidence>
<feature type="chain" id="PRO_1000000461" description="Argininosuccinate lyase">
    <location>
        <begin position="1"/>
        <end position="469"/>
    </location>
</feature>
<proteinExistence type="inferred from homology"/>
<name>ARLY_BURVG</name>